<protein>
    <recommendedName>
        <fullName>Ig delta chain C region secreted form</fullName>
    </recommendedName>
</protein>
<name>IGHD_MOUSE</name>
<organism>
    <name type="scientific">Mus musculus</name>
    <name type="common">Mouse</name>
    <dbReference type="NCBI Taxonomy" id="10090"/>
    <lineage>
        <taxon>Eukaryota</taxon>
        <taxon>Metazoa</taxon>
        <taxon>Chordata</taxon>
        <taxon>Craniata</taxon>
        <taxon>Vertebrata</taxon>
        <taxon>Euteleostomi</taxon>
        <taxon>Mammalia</taxon>
        <taxon>Eutheria</taxon>
        <taxon>Euarchontoglires</taxon>
        <taxon>Glires</taxon>
        <taxon>Rodentia</taxon>
        <taxon>Myomorpha</taxon>
        <taxon>Muroidea</taxon>
        <taxon>Muridae</taxon>
        <taxon>Murinae</taxon>
        <taxon>Mus</taxon>
        <taxon>Mus</taxon>
    </lineage>
</organism>
<comment type="subcellular location">
    <subcellularLocation>
        <location>Secreted</location>
    </subcellularLocation>
</comment>
<comment type="alternative products">
    <event type="alternative splicing"/>
    <isoform>
        <id>P01881-1</id>
        <name>Secreted</name>
        <sequence type="displayed"/>
    </isoform>
    <isoform>
        <id>P01882-1</id>
        <name>Membrane-bound</name>
        <sequence type="external"/>
    </isoform>
</comment>
<comment type="tissue specificity">
    <text>Cell lines producing IgD contain several mRNA species for Ig delta chains. In plasmacytomas, the secreted form is the major component, and the membrane-bound form is a minor component. In spleen, however, the membrane-bound form is the major component. These two forms differ in their C-terminal segments.</text>
</comment>
<comment type="miscellaneous">
    <text>This delta chain lacks the domain corresponding to the CH2 domain of human delta chain.</text>
</comment>
<proteinExistence type="evidence at protein level"/>
<accession>P01881</accession>
<dbReference type="EMBL" id="J00447">
    <property type="protein sequence ID" value="AAB59652.1"/>
    <property type="molecule type" value="Genomic_DNA"/>
</dbReference>
<dbReference type="EMBL" id="J00448">
    <property type="protein sequence ID" value="AAB59652.1"/>
    <property type="status" value="JOINED"/>
    <property type="molecule type" value="Genomic_DNA"/>
</dbReference>
<dbReference type="EMBL" id="J00449">
    <property type="protein sequence ID" value="AAB59652.1"/>
    <property type="status" value="JOINED"/>
    <property type="molecule type" value="Genomic_DNA"/>
</dbReference>
<dbReference type="EMBL" id="J00450">
    <property type="protein sequence ID" value="AAB59652.1"/>
    <property type="status" value="JOINED"/>
    <property type="molecule type" value="Genomic_DNA"/>
</dbReference>
<dbReference type="PIR" id="A02176">
    <property type="entry name" value="DHMS"/>
</dbReference>
<dbReference type="SMR" id="P01881"/>
<dbReference type="FunCoup" id="P01881">
    <property type="interactions" value="2"/>
</dbReference>
<dbReference type="GlyGen" id="P01881">
    <property type="glycosylation" value="5 sites"/>
</dbReference>
<dbReference type="InParanoid" id="P01881"/>
<dbReference type="Proteomes" id="UP000000589">
    <property type="component" value="Unplaced"/>
</dbReference>
<dbReference type="RNAct" id="P01881">
    <property type="molecule type" value="protein"/>
</dbReference>
<dbReference type="GO" id="GO:0005576">
    <property type="term" value="C:extracellular region"/>
    <property type="evidence" value="ECO:0007669"/>
    <property type="project" value="UniProtKB-SubCell"/>
</dbReference>
<dbReference type="FunFam" id="2.60.40.10:FF:002428">
    <property type="entry name" value="Immunoglobulin heavy constant delta"/>
    <property type="match status" value="1"/>
</dbReference>
<dbReference type="Gene3D" id="2.60.40.10">
    <property type="entry name" value="Immunoglobulins"/>
    <property type="match status" value="2"/>
</dbReference>
<dbReference type="InterPro" id="IPR007110">
    <property type="entry name" value="Ig-like_dom"/>
</dbReference>
<dbReference type="InterPro" id="IPR036179">
    <property type="entry name" value="Ig-like_dom_sf"/>
</dbReference>
<dbReference type="InterPro" id="IPR013783">
    <property type="entry name" value="Ig-like_fold"/>
</dbReference>
<dbReference type="InterPro" id="IPR003006">
    <property type="entry name" value="Ig/MHC_CS"/>
</dbReference>
<dbReference type="InterPro" id="IPR003597">
    <property type="entry name" value="Ig_C1-set"/>
</dbReference>
<dbReference type="InterPro" id="IPR050380">
    <property type="entry name" value="Immune_Resp_Modulators"/>
</dbReference>
<dbReference type="PANTHER" id="PTHR23411">
    <property type="entry name" value="TAPASIN"/>
    <property type="match status" value="1"/>
</dbReference>
<dbReference type="Pfam" id="PF07654">
    <property type="entry name" value="C1-set"/>
    <property type="match status" value="1"/>
</dbReference>
<dbReference type="SMART" id="SM00407">
    <property type="entry name" value="IGc1"/>
    <property type="match status" value="1"/>
</dbReference>
<dbReference type="SUPFAM" id="SSF48726">
    <property type="entry name" value="Immunoglobulin"/>
    <property type="match status" value="2"/>
</dbReference>
<dbReference type="PROSITE" id="PS50835">
    <property type="entry name" value="IG_LIKE"/>
    <property type="match status" value="2"/>
</dbReference>
<dbReference type="PROSITE" id="PS00290">
    <property type="entry name" value="IG_MHC"/>
    <property type="match status" value="1"/>
</dbReference>
<evidence type="ECO:0000255" key="1">
    <source>
        <dbReference type="PROSITE-ProRule" id="PRU00114"/>
    </source>
</evidence>
<evidence type="ECO:0000256" key="2">
    <source>
        <dbReference type="SAM" id="MobiDB-lite"/>
    </source>
</evidence>
<evidence type="ECO:0000305" key="3"/>
<feature type="chain" id="PRO_0000153571" description="Ig delta chain C region secreted form">
    <location>
        <begin position="1" status="less than"/>
        <end position="257"/>
    </location>
</feature>
<feature type="domain" description="Ig-like 1">
    <location>
        <begin position="5"/>
        <end position="105"/>
    </location>
</feature>
<feature type="domain" description="Ig-like 2">
    <location>
        <begin position="133"/>
        <end position="233"/>
    </location>
</feature>
<feature type="region of interest" description="Disordered" evidence="2">
    <location>
        <begin position="89"/>
        <end position="111"/>
    </location>
</feature>
<feature type="compositionally biased region" description="Polar residues" evidence="2">
    <location>
        <begin position="96"/>
        <end position="111"/>
    </location>
</feature>
<feature type="glycosylation site" description="N-linked (GlcNAc...) asparagine" evidence="3">
    <location>
        <position position="58"/>
    </location>
</feature>
<feature type="glycosylation site" description="N-linked (GlcNAc...) asparagine" evidence="3">
    <location>
        <position position="75"/>
    </location>
</feature>
<feature type="glycosylation site" description="N-linked (GlcNAc...) asparagine" evidence="3">
    <location>
        <position position="112"/>
    </location>
</feature>
<feature type="glycosylation site" description="N-linked (GlcNAc...) asparagine" evidence="3">
    <location>
        <position position="135"/>
    </location>
</feature>
<feature type="glycosylation site" description="N-linked (GlcNAc...) asparagine" evidence="3">
    <location>
        <position position="227"/>
    </location>
</feature>
<feature type="disulfide bond" description="Interchain (with light chain)" evidence="1">
    <location>
        <position position="13"/>
    </location>
</feature>
<feature type="disulfide bond" evidence="1">
    <location>
        <begin position="26"/>
        <end position="78"/>
    </location>
</feature>
<feature type="disulfide bond" description="Interchain (with heavy chain)" evidence="1">
    <location>
        <position position="155"/>
    </location>
</feature>
<feature type="non-terminal residue">
    <location>
        <position position="1"/>
    </location>
</feature>
<reference key="1">
    <citation type="journal article" date="1980" name="Science">
        <title>Mouse immunoglobulin D: messenger RNA and genomic DNA sequences.</title>
        <authorList>
            <person name="Tucker P.W."/>
            <person name="Liu C.-P."/>
            <person name="Mushinski J.F."/>
            <person name="Blattner F.R."/>
        </authorList>
    </citation>
    <scope>NUCLEOTIDE SEQUENCE [GENOMIC DNA] OF 1-248 (TEPC 1017)</scope>
</reference>
<reference key="2">
    <citation type="journal article" date="1981" name="Nature">
        <title>C-terminal sequence of the secreted form of mouse IgD heavy chain.</title>
        <authorList>
            <person name="Dildrop R."/>
            <person name="Beyreuther K."/>
        </authorList>
    </citation>
    <scope>PROTEIN SEQUENCE OF 231-257 (B1-8.DELTA-1)</scope>
</reference>
<reference key="3">
    <citation type="journal article" date="1982" name="Nature">
        <title>Structure of genes for membrane and secreted murine IgD heavy chains.</title>
        <authorList>
            <person name="Cheng H.-L."/>
            <person name="Blattner F.R."/>
            <person name="Fitzmaurice L."/>
            <person name="Mushinski J.F."/>
            <person name="Tucker P.W."/>
        </authorList>
    </citation>
    <scope>NUCLEOTIDE SEQUENCE [GENOMIC DNA] OF 237-257</scope>
</reference>
<reference key="4">
    <citation type="journal article" date="2010" name="Cell">
        <title>A tissue-specific atlas of mouse protein phosphorylation and expression.</title>
        <authorList>
            <person name="Huttlin E.L."/>
            <person name="Jedrychowski M.P."/>
            <person name="Elias J.E."/>
            <person name="Goswami T."/>
            <person name="Rad R."/>
            <person name="Beausoleil S.A."/>
            <person name="Villen J."/>
            <person name="Haas W."/>
            <person name="Sowa M.E."/>
            <person name="Gygi S.P."/>
        </authorList>
    </citation>
    <scope>IDENTIFICATION BY MASS SPECTROMETRY [LARGE SCALE ANALYSIS]</scope>
    <source>
        <tissue>Spleen</tissue>
    </source>
</reference>
<keyword id="KW-0025">Alternative splicing</keyword>
<keyword id="KW-0903">Direct protein sequencing</keyword>
<keyword id="KW-1015">Disulfide bond</keyword>
<keyword id="KW-0325">Glycoprotein</keyword>
<keyword id="KW-0393">Immunoglobulin domain</keyword>
<keyword id="KW-1185">Reference proteome</keyword>
<keyword id="KW-0677">Repeat</keyword>
<keyword id="KW-0964">Secreted</keyword>
<sequence>DKKEPDMFLLSECKAPEENEKINLGCLVIGSQPLKISWEPKKSSIVEHVFPSEMRNGNYTMVLQVTVLASELNLNHTCTINKPKRKEKPFKFPESWDSQSSKRVTPTLQAKNHSTEATKAITTKKDIEGAMAPSNLTVNILTTSTHPEMSSWLLCEVSGFFPENIHLMWLGVHSKMKSTNFVTANPTAQPGGTFQTWSVLRLPVALSSSLDTYTCVVEHEASKTKLNASKSLAISGCYHLLPESDGPSRRPDGPALA</sequence>